<sequence>MLPPKTFFEKVKEIIWPIERKELKLFIPMALMMLCILFNFGALRSIKDSLVVPSMGAEIISFLKLWLVLPACVIFTILYVKLSNKFNFEYVFYIIVGSFLLFFLFFAYIIYPNQEAYHPNNEIINSLITSYPNFKWFIKIASKWSYGLMYIFAELWSAVVINLMFWQFANHIFDTNKAKRFYPVLGMVGNIGLILAGSVLVFFSGNKIIDPELLPNSFDASVNLTSQTTEMLQPIMSIIVAAGVISMLLFRIINKSILTDSINVLDSKKVKAKTKTKLSVLESIKLVINSKYIGRIALLIICYGLLINIVEGPWKAKVKELYPSTIDYVHFMGRFNILMGISCVTFMIIGSNILRRLGWFFSALLTPIMLSITGLMFFIFIIFIEEIGSCFGNFNLLYAAIIVGAIQNILSKSSKYSLFDSTKEMAYIPLSLELRTKGKAAVEVIGTKFGKSLGAFIQSLIFIIIPTATFDSIIIYLLVIFIVMISLWIWDVVKLNKEYTELCK</sequence>
<name>TLCC_RICBR</name>
<keyword id="KW-0067">ATP-binding</keyword>
<keyword id="KW-1003">Cell membrane</keyword>
<keyword id="KW-0472">Membrane</keyword>
<keyword id="KW-0547">Nucleotide-binding</keyword>
<keyword id="KW-0812">Transmembrane</keyword>
<keyword id="KW-1133">Transmembrane helix</keyword>
<keyword id="KW-0813">Transport</keyword>
<feature type="chain" id="PRO_0000286483" description="ADP,ATP carrier protein 3">
    <location>
        <begin position="1"/>
        <end position="504"/>
    </location>
</feature>
<feature type="transmembrane region" description="Helical" evidence="2">
    <location>
        <begin position="23"/>
        <end position="43"/>
    </location>
</feature>
<feature type="transmembrane region" description="Helical" evidence="2">
    <location>
        <begin position="59"/>
        <end position="79"/>
    </location>
</feature>
<feature type="transmembrane region" description="Helical" evidence="2">
    <location>
        <begin position="90"/>
        <end position="110"/>
    </location>
</feature>
<feature type="transmembrane region" description="Helical" evidence="2">
    <location>
        <begin position="146"/>
        <end position="166"/>
    </location>
</feature>
<feature type="transmembrane region" description="Helical" evidence="2">
    <location>
        <begin position="183"/>
        <end position="203"/>
    </location>
</feature>
<feature type="transmembrane region" description="Helical" evidence="2">
    <location>
        <begin position="230"/>
        <end position="250"/>
    </location>
</feature>
<feature type="transmembrane region" description="Helical" evidence="2">
    <location>
        <begin position="296"/>
        <end position="316"/>
    </location>
</feature>
<feature type="transmembrane region" description="Helical" evidence="2">
    <location>
        <begin position="329"/>
        <end position="349"/>
    </location>
</feature>
<feature type="transmembrane region" description="Helical" evidence="2">
    <location>
        <begin position="364"/>
        <end position="384"/>
    </location>
</feature>
<feature type="transmembrane region" description="Helical" evidence="2">
    <location>
        <begin position="386"/>
        <end position="406"/>
    </location>
</feature>
<feature type="transmembrane region" description="Helical" evidence="2">
    <location>
        <begin position="449"/>
        <end position="469"/>
    </location>
</feature>
<feature type="transmembrane region" description="Helical" evidence="2">
    <location>
        <begin position="473"/>
        <end position="493"/>
    </location>
</feature>
<proteinExistence type="inferred from homology"/>
<gene>
    <name type="primary">tlcC</name>
    <name type="synonym">tlc3</name>
    <name type="ordered locus">RBE_0721</name>
</gene>
<comment type="function">
    <text evidence="1">Provides the rickettsial cell with host ATP in exchange for rickettsial ADP. This is an obligate exchange system. This energy acquiring activity is an important component of rickettsial parasitism (By similarity).</text>
</comment>
<comment type="subcellular location">
    <subcellularLocation>
        <location>Cell membrane</location>
        <topology>Multi-pass membrane protein</topology>
    </subcellularLocation>
</comment>
<comment type="similarity">
    <text evidence="3">Belongs to the ADP/ATP translocase tlc family.</text>
</comment>
<organism>
    <name type="scientific">Rickettsia bellii (strain RML369-C)</name>
    <dbReference type="NCBI Taxonomy" id="336407"/>
    <lineage>
        <taxon>Bacteria</taxon>
        <taxon>Pseudomonadati</taxon>
        <taxon>Pseudomonadota</taxon>
        <taxon>Alphaproteobacteria</taxon>
        <taxon>Rickettsiales</taxon>
        <taxon>Rickettsiaceae</taxon>
        <taxon>Rickettsieae</taxon>
        <taxon>Rickettsia</taxon>
        <taxon>belli group</taxon>
    </lineage>
</organism>
<accession>Q1RIL2</accession>
<reference key="1">
    <citation type="journal article" date="2006" name="PLoS Genet.">
        <title>Genome sequence of Rickettsia bellii illuminates the role of amoebae in gene exchanges between intracellular pathogens.</title>
        <authorList>
            <person name="Ogata H."/>
            <person name="La Scola B."/>
            <person name="Audic S."/>
            <person name="Renesto P."/>
            <person name="Blanc G."/>
            <person name="Robert C."/>
            <person name="Fournier P.-E."/>
            <person name="Claverie J.-M."/>
            <person name="Raoult D."/>
        </authorList>
    </citation>
    <scope>NUCLEOTIDE SEQUENCE [LARGE SCALE GENOMIC DNA]</scope>
    <source>
        <strain>RML369-C</strain>
    </source>
</reference>
<protein>
    <recommendedName>
        <fullName>ADP,ATP carrier protein 3</fullName>
    </recommendedName>
    <alternativeName>
        <fullName>ADP/ATP translocase 3</fullName>
    </alternativeName>
</protein>
<dbReference type="EMBL" id="CP000087">
    <property type="protein sequence ID" value="ABE04802.1"/>
    <property type="molecule type" value="Genomic_DNA"/>
</dbReference>
<dbReference type="RefSeq" id="WP_011477389.1">
    <property type="nucleotide sequence ID" value="NC_007940.1"/>
</dbReference>
<dbReference type="KEGG" id="rbe:RBE_0721"/>
<dbReference type="eggNOG" id="COG3202">
    <property type="taxonomic scope" value="Bacteria"/>
</dbReference>
<dbReference type="HOGENOM" id="CLU_023964_0_1_5"/>
<dbReference type="OrthoDB" id="19786at2"/>
<dbReference type="Proteomes" id="UP000001951">
    <property type="component" value="Chromosome"/>
</dbReference>
<dbReference type="GO" id="GO:0005886">
    <property type="term" value="C:plasma membrane"/>
    <property type="evidence" value="ECO:0007669"/>
    <property type="project" value="UniProtKB-SubCell"/>
</dbReference>
<dbReference type="GO" id="GO:0005524">
    <property type="term" value="F:ATP binding"/>
    <property type="evidence" value="ECO:0007669"/>
    <property type="project" value="UniProtKB-KW"/>
</dbReference>
<dbReference type="GO" id="GO:0005471">
    <property type="term" value="F:ATP:ADP antiporter activity"/>
    <property type="evidence" value="ECO:0007669"/>
    <property type="project" value="InterPro"/>
</dbReference>
<dbReference type="InterPro" id="IPR004667">
    <property type="entry name" value="ADP_ATP_car_bac_type"/>
</dbReference>
<dbReference type="NCBIfam" id="TIGR00769">
    <property type="entry name" value="AAA"/>
    <property type="match status" value="1"/>
</dbReference>
<dbReference type="PANTHER" id="PTHR31187">
    <property type="match status" value="1"/>
</dbReference>
<dbReference type="PANTHER" id="PTHR31187:SF1">
    <property type="entry name" value="ADP,ATP CARRIER PROTEIN 1"/>
    <property type="match status" value="1"/>
</dbReference>
<dbReference type="Pfam" id="PF03219">
    <property type="entry name" value="TLC"/>
    <property type="match status" value="1"/>
</dbReference>
<evidence type="ECO:0000250" key="1"/>
<evidence type="ECO:0000255" key="2"/>
<evidence type="ECO:0000305" key="3"/>